<keyword id="KW-0227">DNA damage</keyword>
<keyword id="KW-0233">DNA recombination</keyword>
<keyword id="KW-0234">DNA repair</keyword>
<keyword id="KW-0255">Endonuclease</keyword>
<keyword id="KW-0378">Hydrolase</keyword>
<keyword id="KW-0479">Metal-binding</keyword>
<keyword id="KW-0540">Nuclease</keyword>
<keyword id="KW-0539">Nucleus</keyword>
<keyword id="KW-1185">Reference proteome</keyword>
<keyword id="KW-0862">Zinc</keyword>
<keyword id="KW-0863">Zinc-finger</keyword>
<proteinExistence type="inferred from homology"/>
<protein>
    <recommendedName>
        <fullName evidence="1">Structure-specific endonuclease subunit slx1</fullName>
        <ecNumber evidence="1">3.1.-.-</ecNumber>
    </recommendedName>
</protein>
<organism>
    <name type="scientific">Neurospora crassa (strain ATCC 24698 / 74-OR23-1A / CBS 708.71 / DSM 1257 / FGSC 987)</name>
    <dbReference type="NCBI Taxonomy" id="367110"/>
    <lineage>
        <taxon>Eukaryota</taxon>
        <taxon>Fungi</taxon>
        <taxon>Dikarya</taxon>
        <taxon>Ascomycota</taxon>
        <taxon>Pezizomycotina</taxon>
        <taxon>Sordariomycetes</taxon>
        <taxon>Sordariomycetidae</taxon>
        <taxon>Sordariales</taxon>
        <taxon>Sordariaceae</taxon>
        <taxon>Neurospora</taxon>
    </lineage>
</organism>
<evidence type="ECO:0000255" key="1">
    <source>
        <dbReference type="HAMAP-Rule" id="MF_03100"/>
    </source>
</evidence>
<evidence type="ECO:0000256" key="2">
    <source>
        <dbReference type="SAM" id="MobiDB-lite"/>
    </source>
</evidence>
<gene>
    <name type="primary">slx1</name>
    <name type="ORF">8D4.030</name>
    <name type="ORF">NCU01236</name>
</gene>
<feature type="chain" id="PRO_0000383788" description="Structure-specific endonuclease subunit slx1">
    <location>
        <begin position="1"/>
        <end position="402"/>
    </location>
</feature>
<feature type="domain" description="GIY-YIG" evidence="1">
    <location>
        <begin position="15"/>
        <end position="97"/>
    </location>
</feature>
<feature type="zinc finger region" description="SLX1-type" evidence="1">
    <location>
        <begin position="253"/>
        <end position="314"/>
    </location>
</feature>
<feature type="region of interest" description="Disordered" evidence="2">
    <location>
        <begin position="190"/>
        <end position="219"/>
    </location>
</feature>
<feature type="region of interest" description="Disordered" evidence="2">
    <location>
        <begin position="344"/>
        <end position="391"/>
    </location>
</feature>
<feature type="compositionally biased region" description="Acidic residues" evidence="2">
    <location>
        <begin position="201"/>
        <end position="217"/>
    </location>
</feature>
<feature type="compositionally biased region" description="Basic and acidic residues" evidence="2">
    <location>
        <begin position="351"/>
        <end position="380"/>
    </location>
</feature>
<reference key="1">
    <citation type="journal article" date="2003" name="Nucleic Acids Res.">
        <title>What's in the genome of a filamentous fungus? Analysis of the Neurospora genome sequence.</title>
        <authorList>
            <person name="Mannhaupt G."/>
            <person name="Montrone C."/>
            <person name="Haase D."/>
            <person name="Mewes H.-W."/>
            <person name="Aign V."/>
            <person name="Hoheisel J.D."/>
            <person name="Fartmann B."/>
            <person name="Nyakatura G."/>
            <person name="Kempken F."/>
            <person name="Maier J."/>
            <person name="Schulte U."/>
        </authorList>
    </citation>
    <scope>NUCLEOTIDE SEQUENCE [LARGE SCALE GENOMIC DNA]</scope>
    <source>
        <strain>ATCC 24698 / 74-OR23-1A / CBS 708.71 / DSM 1257 / FGSC 987</strain>
    </source>
</reference>
<reference key="2">
    <citation type="journal article" date="2003" name="Nature">
        <title>The genome sequence of the filamentous fungus Neurospora crassa.</title>
        <authorList>
            <person name="Galagan J.E."/>
            <person name="Calvo S.E."/>
            <person name="Borkovich K.A."/>
            <person name="Selker E.U."/>
            <person name="Read N.D."/>
            <person name="Jaffe D.B."/>
            <person name="FitzHugh W."/>
            <person name="Ma L.-J."/>
            <person name="Smirnov S."/>
            <person name="Purcell S."/>
            <person name="Rehman B."/>
            <person name="Elkins T."/>
            <person name="Engels R."/>
            <person name="Wang S."/>
            <person name="Nielsen C.B."/>
            <person name="Butler J."/>
            <person name="Endrizzi M."/>
            <person name="Qui D."/>
            <person name="Ianakiev P."/>
            <person name="Bell-Pedersen D."/>
            <person name="Nelson M.A."/>
            <person name="Werner-Washburne M."/>
            <person name="Selitrennikoff C.P."/>
            <person name="Kinsey J.A."/>
            <person name="Braun E.L."/>
            <person name="Zelter A."/>
            <person name="Schulte U."/>
            <person name="Kothe G.O."/>
            <person name="Jedd G."/>
            <person name="Mewes H.-W."/>
            <person name="Staben C."/>
            <person name="Marcotte E."/>
            <person name="Greenberg D."/>
            <person name="Roy A."/>
            <person name="Foley K."/>
            <person name="Naylor J."/>
            <person name="Stange-Thomann N."/>
            <person name="Barrett R."/>
            <person name="Gnerre S."/>
            <person name="Kamal M."/>
            <person name="Kamvysselis M."/>
            <person name="Mauceli E.W."/>
            <person name="Bielke C."/>
            <person name="Rudd S."/>
            <person name="Frishman D."/>
            <person name="Krystofova S."/>
            <person name="Rasmussen C."/>
            <person name="Metzenberg R.L."/>
            <person name="Perkins D.D."/>
            <person name="Kroken S."/>
            <person name="Cogoni C."/>
            <person name="Macino G."/>
            <person name="Catcheside D.E.A."/>
            <person name="Li W."/>
            <person name="Pratt R.J."/>
            <person name="Osmani S.A."/>
            <person name="DeSouza C.P.C."/>
            <person name="Glass N.L."/>
            <person name="Orbach M.J."/>
            <person name="Berglund J.A."/>
            <person name="Voelker R."/>
            <person name="Yarden O."/>
            <person name="Plamann M."/>
            <person name="Seiler S."/>
            <person name="Dunlap J.C."/>
            <person name="Radford A."/>
            <person name="Aramayo R."/>
            <person name="Natvig D.O."/>
            <person name="Alex L.A."/>
            <person name="Mannhaupt G."/>
            <person name="Ebbole D.J."/>
            <person name="Freitag M."/>
            <person name="Paulsen I."/>
            <person name="Sachs M.S."/>
            <person name="Lander E.S."/>
            <person name="Nusbaum C."/>
            <person name="Birren B.W."/>
        </authorList>
    </citation>
    <scope>NUCLEOTIDE SEQUENCE [LARGE SCALE GENOMIC DNA]</scope>
    <source>
        <strain>ATCC 24698 / 74-OR23-1A / CBS 708.71 / DSM 1257 / FGSC 987</strain>
    </source>
</reference>
<sequence>MSTTTTQIQPKPIPALYTVYILRSQPRHASLYIGSTPHPPRRLSQHNGLAKGGAYRTSKISLRPWNMVCLVSGFPSMIAALKFEWALNNPHKSLHIPAEKRAEAVKGLGRRKTGHLKRPRKSLVGVMEALRMLVGVRSFGRWPLRVHFFEEDVWRVWERGGWKAKSGGGGVGELGDLKVEVVTDFGSPTAPQGAGVIGMGEEAENDPHDDDDGDDAQDENKHGIYALPLDYAPIKDYVAKSQEIWEFERQGSCVVCKEAMVAGRGLYAICPNTSCEAVGHLDCWSRCLLKQETRRMKIDEGDEILPVKGECPKCHGEVLWGDMMKELTLRIRGQAEVEKLLKKKKRRRAAKGKEKGKGKVADEKGNNAEGRNTKGNREVKTTPQRVVEDSEDSEFLDIACLQ</sequence>
<comment type="function">
    <text evidence="1">Catalytic subunit of the slx1-slx4 structure-specific endonuclease that resolves DNA secondary structures generated during DNA repair and recombination. Has endonuclease activity towards branched DNA substrates, introducing single-strand cuts in duplex DNA close to junctions with ss-DNA.</text>
</comment>
<comment type="cofactor">
    <cofactor evidence="1">
        <name>a divalent metal cation</name>
        <dbReference type="ChEBI" id="CHEBI:60240"/>
    </cofactor>
</comment>
<comment type="subunit">
    <text evidence="1">Forms a heterodimer with slx4.</text>
</comment>
<comment type="subcellular location">
    <subcellularLocation>
        <location evidence="1">Nucleus</location>
    </subcellularLocation>
</comment>
<comment type="similarity">
    <text evidence="1">Belongs to the SLX1 family.</text>
</comment>
<dbReference type="EC" id="3.1.-.-" evidence="1"/>
<dbReference type="EMBL" id="AL353819">
    <property type="protein sequence ID" value="CAB88545.1"/>
    <property type="molecule type" value="Genomic_DNA"/>
</dbReference>
<dbReference type="EMBL" id="CM002240">
    <property type="protein sequence ID" value="EAA32366.1"/>
    <property type="molecule type" value="Genomic_DNA"/>
</dbReference>
<dbReference type="PIR" id="T48729">
    <property type="entry name" value="T48729"/>
</dbReference>
<dbReference type="RefSeq" id="XP_961602.1">
    <property type="nucleotide sequence ID" value="XM_956509.2"/>
</dbReference>
<dbReference type="SMR" id="Q9P737"/>
<dbReference type="FunCoup" id="Q9P737">
    <property type="interactions" value="378"/>
</dbReference>
<dbReference type="STRING" id="367110.Q9P737"/>
<dbReference type="PaxDb" id="5141-EFNCRP00000004276"/>
<dbReference type="EnsemblFungi" id="EAA32366">
    <property type="protein sequence ID" value="EAA32366"/>
    <property type="gene ID" value="NCU01236"/>
</dbReference>
<dbReference type="GeneID" id="3877750"/>
<dbReference type="KEGG" id="ncr:NCU01236"/>
<dbReference type="VEuPathDB" id="FungiDB:NCU01236"/>
<dbReference type="HOGENOM" id="CLU_030739_1_0_1"/>
<dbReference type="InParanoid" id="Q9P737"/>
<dbReference type="OMA" id="HNRGCDF"/>
<dbReference type="OrthoDB" id="24645at2759"/>
<dbReference type="Proteomes" id="UP000001805">
    <property type="component" value="Chromosome 2, Linkage Group V"/>
</dbReference>
<dbReference type="GO" id="GO:0033557">
    <property type="term" value="C:Slx1-Slx4 complex"/>
    <property type="evidence" value="ECO:0000318"/>
    <property type="project" value="GO_Central"/>
</dbReference>
<dbReference type="GO" id="GO:0017108">
    <property type="term" value="F:5'-flap endonuclease activity"/>
    <property type="evidence" value="ECO:0000318"/>
    <property type="project" value="GO_Central"/>
</dbReference>
<dbReference type="GO" id="GO:0008821">
    <property type="term" value="F:crossover junction DNA endonuclease activity"/>
    <property type="evidence" value="ECO:0000318"/>
    <property type="project" value="GO_Central"/>
</dbReference>
<dbReference type="GO" id="GO:0008270">
    <property type="term" value="F:zinc ion binding"/>
    <property type="evidence" value="ECO:0007669"/>
    <property type="project" value="UniProtKB-KW"/>
</dbReference>
<dbReference type="GO" id="GO:0000724">
    <property type="term" value="P:double-strand break repair via homologous recombination"/>
    <property type="evidence" value="ECO:0000318"/>
    <property type="project" value="GO_Central"/>
</dbReference>
<dbReference type="CDD" id="cd10455">
    <property type="entry name" value="GIY-YIG_SLX1"/>
    <property type="match status" value="1"/>
</dbReference>
<dbReference type="FunFam" id="3.40.1440.10:FF:000015">
    <property type="entry name" value="Structure-specific endonuclease subunit SLX1"/>
    <property type="match status" value="1"/>
</dbReference>
<dbReference type="Gene3D" id="3.40.1440.10">
    <property type="entry name" value="GIY-YIG endonuclease"/>
    <property type="match status" value="1"/>
</dbReference>
<dbReference type="Gene3D" id="3.30.40.10">
    <property type="entry name" value="Zinc/RING finger domain, C3HC4 (zinc finger)"/>
    <property type="match status" value="1"/>
</dbReference>
<dbReference type="HAMAP" id="MF_03100">
    <property type="entry name" value="Endonuc_su_Slx1"/>
    <property type="match status" value="1"/>
</dbReference>
<dbReference type="InterPro" id="IPR000305">
    <property type="entry name" value="GIY-YIG_endonuc"/>
</dbReference>
<dbReference type="InterPro" id="IPR035901">
    <property type="entry name" value="GIY-YIG_endonuc_sf"/>
</dbReference>
<dbReference type="InterPro" id="IPR027520">
    <property type="entry name" value="Slx1"/>
</dbReference>
<dbReference type="InterPro" id="IPR048749">
    <property type="entry name" value="SLX1_C"/>
</dbReference>
<dbReference type="InterPro" id="IPR050381">
    <property type="entry name" value="SLX1_endonuclease"/>
</dbReference>
<dbReference type="InterPro" id="IPR013083">
    <property type="entry name" value="Znf_RING/FYVE/PHD"/>
</dbReference>
<dbReference type="PANTHER" id="PTHR20208">
    <property type="entry name" value="STRUCTURE-SPECIFIC ENDONUCLEASE SUBUNIT SLX1"/>
    <property type="match status" value="1"/>
</dbReference>
<dbReference type="PANTHER" id="PTHR20208:SF10">
    <property type="entry name" value="STRUCTURE-SPECIFIC ENDONUCLEASE SUBUNIT SLX1"/>
    <property type="match status" value="1"/>
</dbReference>
<dbReference type="Pfam" id="PF01541">
    <property type="entry name" value="GIY-YIG"/>
    <property type="match status" value="1"/>
</dbReference>
<dbReference type="Pfam" id="PF21202">
    <property type="entry name" value="SLX1_C"/>
    <property type="match status" value="1"/>
</dbReference>
<dbReference type="PROSITE" id="PS50164">
    <property type="entry name" value="GIY_YIG"/>
    <property type="match status" value="1"/>
</dbReference>
<name>SLX1_NEUCR</name>
<accession>Q9P737</accession>